<protein>
    <recommendedName>
        <fullName evidence="1">Aspartate carbamoyltransferase catalytic subunit</fullName>
        <ecNumber evidence="1">2.1.3.2</ecNumber>
    </recommendedName>
    <alternativeName>
        <fullName evidence="1">Aspartate transcarbamylase</fullName>
        <shortName evidence="1">ATCase</shortName>
    </alternativeName>
</protein>
<organism>
    <name type="scientific">Streptococcus pyogenes serotype M18 (strain MGAS8232)</name>
    <dbReference type="NCBI Taxonomy" id="186103"/>
    <lineage>
        <taxon>Bacteria</taxon>
        <taxon>Bacillati</taxon>
        <taxon>Bacillota</taxon>
        <taxon>Bacilli</taxon>
        <taxon>Lactobacillales</taxon>
        <taxon>Streptococcaceae</taxon>
        <taxon>Streptococcus</taxon>
    </lineage>
</organism>
<name>PYRB_STRP8</name>
<keyword id="KW-0665">Pyrimidine biosynthesis</keyword>
<keyword id="KW-0808">Transferase</keyword>
<sequence length="311" mass="34641">MSVVNNRVALTNLVSMEALTTEEVLGLINRGSEYKAGKVVISDHQKDLVANLFFENSTRTHKSFEVAEKKLGLTVLDFNADASAVNKGESLYDTVLTMSALGTDICVIRHPEDDYYKELVESPTITASIVNGGDGSGQHPSQCLLDLLTIYEEFGRFEGLKIAIAGDLTHSRVAKSNMQILKRLGAELYFYGPEEWYSEAFNAYGTYIAIDQIIKELDVLMLLRVQHERHDGHQSFSKEGYHQAFGLTQERYQQLKDSAIIMHPAPVNRDVEIADSLVEAPKARIVSQMANGVFVRMAIIEAILNGRNKNL</sequence>
<feature type="chain" id="PRO_0000113211" description="Aspartate carbamoyltransferase catalytic subunit">
    <location>
        <begin position="1"/>
        <end position="311"/>
    </location>
</feature>
<feature type="binding site" evidence="1">
    <location>
        <position position="59"/>
    </location>
    <ligand>
        <name>carbamoyl phosphate</name>
        <dbReference type="ChEBI" id="CHEBI:58228"/>
    </ligand>
</feature>
<feature type="binding site" evidence="1">
    <location>
        <position position="60"/>
    </location>
    <ligand>
        <name>carbamoyl phosphate</name>
        <dbReference type="ChEBI" id="CHEBI:58228"/>
    </ligand>
</feature>
<feature type="binding site" evidence="1">
    <location>
        <position position="87"/>
    </location>
    <ligand>
        <name>L-aspartate</name>
        <dbReference type="ChEBI" id="CHEBI:29991"/>
    </ligand>
</feature>
<feature type="binding site" evidence="1">
    <location>
        <position position="109"/>
    </location>
    <ligand>
        <name>carbamoyl phosphate</name>
        <dbReference type="ChEBI" id="CHEBI:58228"/>
    </ligand>
</feature>
<feature type="binding site" evidence="1">
    <location>
        <position position="139"/>
    </location>
    <ligand>
        <name>carbamoyl phosphate</name>
        <dbReference type="ChEBI" id="CHEBI:58228"/>
    </ligand>
</feature>
<feature type="binding site" evidence="1">
    <location>
        <position position="142"/>
    </location>
    <ligand>
        <name>carbamoyl phosphate</name>
        <dbReference type="ChEBI" id="CHEBI:58228"/>
    </ligand>
</feature>
<feature type="binding site" evidence="1">
    <location>
        <position position="172"/>
    </location>
    <ligand>
        <name>L-aspartate</name>
        <dbReference type="ChEBI" id="CHEBI:29991"/>
    </ligand>
</feature>
<feature type="binding site" evidence="1">
    <location>
        <position position="224"/>
    </location>
    <ligand>
        <name>L-aspartate</name>
        <dbReference type="ChEBI" id="CHEBI:29991"/>
    </ligand>
</feature>
<feature type="binding site" evidence="1">
    <location>
        <position position="265"/>
    </location>
    <ligand>
        <name>carbamoyl phosphate</name>
        <dbReference type="ChEBI" id="CHEBI:58228"/>
    </ligand>
</feature>
<feature type="binding site" evidence="1">
    <location>
        <position position="266"/>
    </location>
    <ligand>
        <name>carbamoyl phosphate</name>
        <dbReference type="ChEBI" id="CHEBI:58228"/>
    </ligand>
</feature>
<dbReference type="EC" id="2.1.3.2" evidence="1"/>
<dbReference type="EMBL" id="AE009949">
    <property type="protein sequence ID" value="AAL97544.1"/>
    <property type="molecule type" value="Genomic_DNA"/>
</dbReference>
<dbReference type="RefSeq" id="WP_011017650.1">
    <property type="nucleotide sequence ID" value="NC_003485.1"/>
</dbReference>
<dbReference type="SMR" id="Q8P1G1"/>
<dbReference type="KEGG" id="spm:spyM18_0892"/>
<dbReference type="HOGENOM" id="CLU_043846_2_1_9"/>
<dbReference type="UniPathway" id="UPA00070">
    <property type="reaction ID" value="UER00116"/>
</dbReference>
<dbReference type="GO" id="GO:0005829">
    <property type="term" value="C:cytosol"/>
    <property type="evidence" value="ECO:0007669"/>
    <property type="project" value="TreeGrafter"/>
</dbReference>
<dbReference type="GO" id="GO:0016597">
    <property type="term" value="F:amino acid binding"/>
    <property type="evidence" value="ECO:0007669"/>
    <property type="project" value="InterPro"/>
</dbReference>
<dbReference type="GO" id="GO:0004070">
    <property type="term" value="F:aspartate carbamoyltransferase activity"/>
    <property type="evidence" value="ECO:0007669"/>
    <property type="project" value="UniProtKB-UniRule"/>
</dbReference>
<dbReference type="GO" id="GO:0006207">
    <property type="term" value="P:'de novo' pyrimidine nucleobase biosynthetic process"/>
    <property type="evidence" value="ECO:0007669"/>
    <property type="project" value="InterPro"/>
</dbReference>
<dbReference type="GO" id="GO:0044205">
    <property type="term" value="P:'de novo' UMP biosynthetic process"/>
    <property type="evidence" value="ECO:0007669"/>
    <property type="project" value="UniProtKB-UniRule"/>
</dbReference>
<dbReference type="GO" id="GO:0006520">
    <property type="term" value="P:amino acid metabolic process"/>
    <property type="evidence" value="ECO:0007669"/>
    <property type="project" value="InterPro"/>
</dbReference>
<dbReference type="FunFam" id="3.40.50.1370:FF:000011">
    <property type="entry name" value="Aspartate carbamoyltransferase"/>
    <property type="match status" value="1"/>
</dbReference>
<dbReference type="Gene3D" id="3.40.50.1370">
    <property type="entry name" value="Aspartate/ornithine carbamoyltransferase"/>
    <property type="match status" value="2"/>
</dbReference>
<dbReference type="HAMAP" id="MF_00001">
    <property type="entry name" value="Asp_carb_tr"/>
    <property type="match status" value="1"/>
</dbReference>
<dbReference type="InterPro" id="IPR006132">
    <property type="entry name" value="Asp/Orn_carbamoyltranf_P-bd"/>
</dbReference>
<dbReference type="InterPro" id="IPR006130">
    <property type="entry name" value="Asp/Orn_carbamoylTrfase"/>
</dbReference>
<dbReference type="InterPro" id="IPR036901">
    <property type="entry name" value="Asp/Orn_carbamoylTrfase_sf"/>
</dbReference>
<dbReference type="InterPro" id="IPR002082">
    <property type="entry name" value="Asp_carbamoyltransf"/>
</dbReference>
<dbReference type="InterPro" id="IPR006131">
    <property type="entry name" value="Asp_carbamoyltransf_Asp/Orn-bd"/>
</dbReference>
<dbReference type="NCBIfam" id="TIGR00670">
    <property type="entry name" value="asp_carb_tr"/>
    <property type="match status" value="1"/>
</dbReference>
<dbReference type="NCBIfam" id="NF002032">
    <property type="entry name" value="PRK00856.1"/>
    <property type="match status" value="1"/>
</dbReference>
<dbReference type="PANTHER" id="PTHR45753:SF6">
    <property type="entry name" value="ASPARTATE CARBAMOYLTRANSFERASE"/>
    <property type="match status" value="1"/>
</dbReference>
<dbReference type="PANTHER" id="PTHR45753">
    <property type="entry name" value="ORNITHINE CARBAMOYLTRANSFERASE, MITOCHONDRIAL"/>
    <property type="match status" value="1"/>
</dbReference>
<dbReference type="Pfam" id="PF00185">
    <property type="entry name" value="OTCace"/>
    <property type="match status" value="1"/>
</dbReference>
<dbReference type="Pfam" id="PF02729">
    <property type="entry name" value="OTCace_N"/>
    <property type="match status" value="1"/>
</dbReference>
<dbReference type="PRINTS" id="PR00100">
    <property type="entry name" value="AOTCASE"/>
</dbReference>
<dbReference type="PRINTS" id="PR00101">
    <property type="entry name" value="ATCASE"/>
</dbReference>
<dbReference type="SUPFAM" id="SSF53671">
    <property type="entry name" value="Aspartate/ornithine carbamoyltransferase"/>
    <property type="match status" value="1"/>
</dbReference>
<dbReference type="PROSITE" id="PS00097">
    <property type="entry name" value="CARBAMOYLTRANSFERASE"/>
    <property type="match status" value="1"/>
</dbReference>
<evidence type="ECO:0000255" key="1">
    <source>
        <dbReference type="HAMAP-Rule" id="MF_00001"/>
    </source>
</evidence>
<proteinExistence type="inferred from homology"/>
<reference key="1">
    <citation type="journal article" date="2002" name="Proc. Natl. Acad. Sci. U.S.A.">
        <title>Genome sequence and comparative microarray analysis of serotype M18 group A Streptococcus strains associated with acute rheumatic fever outbreaks.</title>
        <authorList>
            <person name="Smoot J.C."/>
            <person name="Barbian K.D."/>
            <person name="Van Gompel J.J."/>
            <person name="Smoot L.M."/>
            <person name="Chaussee M.S."/>
            <person name="Sylva G.L."/>
            <person name="Sturdevant D.E."/>
            <person name="Ricklefs S.M."/>
            <person name="Porcella S.F."/>
            <person name="Parkins L.D."/>
            <person name="Beres S.B."/>
            <person name="Campbell D.S."/>
            <person name="Smith T.M."/>
            <person name="Zhang Q."/>
            <person name="Kapur V."/>
            <person name="Daly J.A."/>
            <person name="Veasy L.G."/>
            <person name="Musser J.M."/>
        </authorList>
    </citation>
    <scope>NUCLEOTIDE SEQUENCE [LARGE SCALE GENOMIC DNA]</scope>
    <source>
        <strain>MGAS8232</strain>
    </source>
</reference>
<gene>
    <name evidence="1" type="primary">pyrB</name>
    <name type="ordered locus">spyM18_0892</name>
</gene>
<comment type="function">
    <text evidence="1">Catalyzes the condensation of carbamoyl phosphate and aspartate to form carbamoyl aspartate and inorganic phosphate, the committed step in the de novo pyrimidine nucleotide biosynthesis pathway.</text>
</comment>
<comment type="catalytic activity">
    <reaction evidence="1">
        <text>carbamoyl phosphate + L-aspartate = N-carbamoyl-L-aspartate + phosphate + H(+)</text>
        <dbReference type="Rhea" id="RHEA:20013"/>
        <dbReference type="ChEBI" id="CHEBI:15378"/>
        <dbReference type="ChEBI" id="CHEBI:29991"/>
        <dbReference type="ChEBI" id="CHEBI:32814"/>
        <dbReference type="ChEBI" id="CHEBI:43474"/>
        <dbReference type="ChEBI" id="CHEBI:58228"/>
        <dbReference type="EC" id="2.1.3.2"/>
    </reaction>
</comment>
<comment type="pathway">
    <text evidence="1">Pyrimidine metabolism; UMP biosynthesis via de novo pathway; (S)-dihydroorotate from bicarbonate: step 2/3.</text>
</comment>
<comment type="subunit">
    <text evidence="1">Heterododecamer (2C3:3R2) of six catalytic PyrB chains organized as two trimers (C3), and six regulatory PyrI chains organized as three dimers (R2).</text>
</comment>
<comment type="similarity">
    <text evidence="1">Belongs to the aspartate/ornithine carbamoyltransferase superfamily. ATCase family.</text>
</comment>
<accession>Q8P1G1</accession>